<sequence length="611" mass="69009">MADKLTRVAIVNSDKCKPKKCRQECKKSCPVVRSGKLCIEVTPESRIAFISEQLCIGCGICPKRCPFGAITIINLPTNLESMITHRYAANSFKLHRLPMPRPGSVLGLVGTNGIGKSTALKILSGKLKPNLGRYDNPPDWEEVIKYFRGSELQNYFTKILEDDLRAVVKPQYVDQIPKAVRTPDKTVKFLIESRKSMDNLDEVLDTLELRHIYDRDVTHLSGGELQRFAIGTVCVQKADVYMFDEPSSYLDVKQRLAAARIIRSLLRPDDYVIVVEHDLSVLDYLSDYVCVLYGQPAVYGVVTLPHSVREGINIFLDGHIPTENLRFREESLTFRMVEGTEDFVAEKSRAFKYPAMEKTLGNFKLRVDAGSFSDSEIIVMMGENGTGKTTFCRLLAGVLKPDGTTRVPEMRISMKPQTITPKFEGTVRQLFFKKIKAAFLSPQFQTDVVKPLKLDDFIDQEVKNLSGGELQRVAIVLALGIPADIYVIDEPSAYLDSEQRIVASRVIKRFIMHAKKTAFIVEHDFIMATYLADRVIVFDGKPGIDAHANKPESLLTGCNTFLKNLDVTFRRDPTNFRPRINKLNSQLDQEQKLSGNYFFLEEGPDKEKERS</sequence>
<evidence type="ECO:0000250" key="1">
    <source>
        <dbReference type="UniProtKB" id="Q03195"/>
    </source>
</evidence>
<evidence type="ECO:0000255" key="2">
    <source>
        <dbReference type="PROSITE-ProRule" id="PRU00434"/>
    </source>
</evidence>
<evidence type="ECO:0000255" key="3">
    <source>
        <dbReference type="PROSITE-ProRule" id="PRU00711"/>
    </source>
</evidence>
<evidence type="ECO:0000305" key="4"/>
<organism>
    <name type="scientific">Chaetomium thermophilum (strain DSM 1495 / CBS 144.50 / IMI 039719)</name>
    <name type="common">Thermochaetoides thermophila</name>
    <dbReference type="NCBI Taxonomy" id="759272"/>
    <lineage>
        <taxon>Eukaryota</taxon>
        <taxon>Fungi</taxon>
        <taxon>Dikarya</taxon>
        <taxon>Ascomycota</taxon>
        <taxon>Pezizomycotina</taxon>
        <taxon>Sordariomycetes</taxon>
        <taxon>Sordariomycetidae</taxon>
        <taxon>Sordariales</taxon>
        <taxon>Chaetomiaceae</taxon>
        <taxon>Thermochaetoides</taxon>
    </lineage>
</organism>
<name>RLI1_CHATD</name>
<protein>
    <recommendedName>
        <fullName>Translation initiation factor RLI1</fullName>
    </recommendedName>
    <alternativeName>
        <fullName>ATP-binding cassette sub-family E member RLI1</fullName>
    </alternativeName>
</protein>
<comment type="function">
    <text evidence="1">Component of the multifactor complex (MFC) involved in translation initiation. Required for the binding of MFC to the 40S ribosome. Required for the processing and nuclear export of the 60S and 40S ribosomal subunits.</text>
</comment>
<comment type="subunit">
    <text evidence="1">Component of the multifactor complex (MFC). The complex associates with pre-initiation complexes.</text>
</comment>
<comment type="subcellular location">
    <subcellularLocation>
        <location evidence="1">Cytoplasm</location>
    </subcellularLocation>
    <subcellularLocation>
        <location evidence="1">Nucleus</location>
    </subcellularLocation>
    <text evidence="1">Shuttles between the nucleus and the cytoplasm.</text>
</comment>
<comment type="similarity">
    <text evidence="4">Belongs to the ABC transporter superfamily. ABCE family.</text>
</comment>
<comment type="sequence caution" evidence="4">
    <conflict type="erroneous gene model prediction">
        <sequence resource="EMBL-CDS" id="EGS17975"/>
    </conflict>
</comment>
<feature type="chain" id="PRO_0000435814" description="Translation initiation factor RLI1">
    <location>
        <begin position="1"/>
        <end position="611"/>
    </location>
</feature>
<feature type="domain" description="4Fe-4S ferredoxin-type 1" evidence="3">
    <location>
        <begin position="7"/>
        <end position="31"/>
    </location>
</feature>
<feature type="domain" description="4Fe-4S ferredoxin-type 2" evidence="3">
    <location>
        <begin position="46"/>
        <end position="75"/>
    </location>
</feature>
<feature type="domain" description="ABC transporter 1" evidence="2">
    <location>
        <begin position="77"/>
        <end position="318"/>
    </location>
</feature>
<feature type="domain" description="ABC transporter 2" evidence="2">
    <location>
        <begin position="345"/>
        <end position="565"/>
    </location>
</feature>
<feature type="binding site" evidence="2">
    <location>
        <begin position="110"/>
        <end position="117"/>
    </location>
    <ligand>
        <name>ATP</name>
        <dbReference type="ChEBI" id="CHEBI:30616"/>
    </ligand>
</feature>
<feature type="binding site" evidence="2">
    <location>
        <begin position="382"/>
        <end position="389"/>
    </location>
    <ligand>
        <name>ATP</name>
        <dbReference type="ChEBI" id="CHEBI:30616"/>
    </ligand>
</feature>
<keyword id="KW-0004">4Fe-4S</keyword>
<keyword id="KW-0067">ATP-binding</keyword>
<keyword id="KW-0963">Cytoplasm</keyword>
<keyword id="KW-0396">Initiation factor</keyword>
<keyword id="KW-0408">Iron</keyword>
<keyword id="KW-0411">Iron-sulfur</keyword>
<keyword id="KW-0479">Metal-binding</keyword>
<keyword id="KW-0547">Nucleotide-binding</keyword>
<keyword id="KW-0539">Nucleus</keyword>
<keyword id="KW-0648">Protein biosynthesis</keyword>
<keyword id="KW-1185">Reference proteome</keyword>
<keyword id="KW-0677">Repeat</keyword>
<keyword id="KW-0690">Ribosome biogenesis</keyword>
<keyword id="KW-0698">rRNA processing</keyword>
<keyword id="KW-0813">Transport</keyword>
<accession>G0SEV9</accession>
<gene>
    <name type="primary">RLI1</name>
    <name type="ORF">CTHT_0059880</name>
</gene>
<reference key="1">
    <citation type="journal article" date="2011" name="Cell">
        <title>Insight into structure and assembly of the nuclear pore complex by utilizing the genome of a eukaryotic thermophile.</title>
        <authorList>
            <person name="Amlacher S."/>
            <person name="Sarges P."/>
            <person name="Flemming D."/>
            <person name="van Noort V."/>
            <person name="Kunze R."/>
            <person name="Devos D.P."/>
            <person name="Arumugam M."/>
            <person name="Bork P."/>
            <person name="Hurt E."/>
        </authorList>
    </citation>
    <scope>NUCLEOTIDE SEQUENCE [LARGE SCALE GENOMIC DNA]</scope>
    <source>
        <strain>DSM 1495 / CBS 144.50 / IMI 039719</strain>
    </source>
</reference>
<dbReference type="EMBL" id="GL988046">
    <property type="protein sequence ID" value="EGS17975.1"/>
    <property type="status" value="ALT_SEQ"/>
    <property type="molecule type" value="Genomic_DNA"/>
</dbReference>
<dbReference type="RefSeq" id="XP_006696306.1">
    <property type="nucleotide sequence ID" value="XM_006696243.1"/>
</dbReference>
<dbReference type="SMR" id="G0SEV9"/>
<dbReference type="STRING" id="759272.G0SEV9"/>
<dbReference type="GeneID" id="18260026"/>
<dbReference type="KEGG" id="cthr:CTHT_0059880"/>
<dbReference type="eggNOG" id="KOG0063">
    <property type="taxonomic scope" value="Eukaryota"/>
</dbReference>
<dbReference type="HOGENOM" id="CLU_017344_4_1_1"/>
<dbReference type="OrthoDB" id="6593433at2759"/>
<dbReference type="Proteomes" id="UP000008066">
    <property type="component" value="Unassembled WGS sequence"/>
</dbReference>
<dbReference type="GO" id="GO:0005737">
    <property type="term" value="C:cytoplasm"/>
    <property type="evidence" value="ECO:0007669"/>
    <property type="project" value="UniProtKB-SubCell"/>
</dbReference>
<dbReference type="GO" id="GO:0005634">
    <property type="term" value="C:nucleus"/>
    <property type="evidence" value="ECO:0007669"/>
    <property type="project" value="UniProtKB-SubCell"/>
</dbReference>
<dbReference type="GO" id="GO:0051539">
    <property type="term" value="F:4 iron, 4 sulfur cluster binding"/>
    <property type="evidence" value="ECO:0007669"/>
    <property type="project" value="UniProtKB-KW"/>
</dbReference>
<dbReference type="GO" id="GO:0005524">
    <property type="term" value="F:ATP binding"/>
    <property type="evidence" value="ECO:0007669"/>
    <property type="project" value="UniProtKB-KW"/>
</dbReference>
<dbReference type="GO" id="GO:0016887">
    <property type="term" value="F:ATP hydrolysis activity"/>
    <property type="evidence" value="ECO:0007669"/>
    <property type="project" value="InterPro"/>
</dbReference>
<dbReference type="GO" id="GO:0046872">
    <property type="term" value="F:metal ion binding"/>
    <property type="evidence" value="ECO:0007669"/>
    <property type="project" value="UniProtKB-KW"/>
</dbReference>
<dbReference type="GO" id="GO:0003743">
    <property type="term" value="F:translation initiation factor activity"/>
    <property type="evidence" value="ECO:0007669"/>
    <property type="project" value="UniProtKB-KW"/>
</dbReference>
<dbReference type="GO" id="GO:0006364">
    <property type="term" value="P:rRNA processing"/>
    <property type="evidence" value="ECO:0007669"/>
    <property type="project" value="UniProtKB-KW"/>
</dbReference>
<dbReference type="CDD" id="cd03236">
    <property type="entry name" value="ABC_RNaseL_inhibitor_domain1"/>
    <property type="match status" value="1"/>
</dbReference>
<dbReference type="FunFam" id="3.40.50.300:FF:000144">
    <property type="entry name" value="ATP-binding cassette sub-family E member 1"/>
    <property type="match status" value="1"/>
</dbReference>
<dbReference type="FunFam" id="3.40.50.300:FF:000152">
    <property type="entry name" value="ATP-binding cassette, sub-family E, member 1"/>
    <property type="match status" value="1"/>
</dbReference>
<dbReference type="Gene3D" id="3.40.50.300">
    <property type="entry name" value="P-loop containing nucleotide triphosphate hydrolases"/>
    <property type="match status" value="2"/>
</dbReference>
<dbReference type="InterPro" id="IPR017896">
    <property type="entry name" value="4Fe4S_Fe-S-bd"/>
</dbReference>
<dbReference type="InterPro" id="IPR003593">
    <property type="entry name" value="AAA+_ATPase"/>
</dbReference>
<dbReference type="InterPro" id="IPR003439">
    <property type="entry name" value="ABC_transporter-like_ATP-bd"/>
</dbReference>
<dbReference type="InterPro" id="IPR017871">
    <property type="entry name" value="ABC_transporter-like_CS"/>
</dbReference>
<dbReference type="InterPro" id="IPR027417">
    <property type="entry name" value="P-loop_NTPase"/>
</dbReference>
<dbReference type="InterPro" id="IPR013283">
    <property type="entry name" value="RLI1"/>
</dbReference>
<dbReference type="InterPro" id="IPR034348">
    <property type="entry name" value="RLI_dom_1"/>
</dbReference>
<dbReference type="InterPro" id="IPR007209">
    <property type="entry name" value="RNaseL-inhib-like_metal-bd_dom"/>
</dbReference>
<dbReference type="NCBIfam" id="NF009945">
    <property type="entry name" value="PRK13409.1"/>
    <property type="match status" value="1"/>
</dbReference>
<dbReference type="PANTHER" id="PTHR19248">
    <property type="entry name" value="ATP-BINDING TRANSPORT PROTEIN-RELATED"/>
    <property type="match status" value="1"/>
</dbReference>
<dbReference type="Pfam" id="PF00005">
    <property type="entry name" value="ABC_tran"/>
    <property type="match status" value="2"/>
</dbReference>
<dbReference type="Pfam" id="PF00037">
    <property type="entry name" value="Fer4"/>
    <property type="match status" value="1"/>
</dbReference>
<dbReference type="Pfam" id="PF04068">
    <property type="entry name" value="Fer4_RLI"/>
    <property type="match status" value="1"/>
</dbReference>
<dbReference type="PRINTS" id="PR01868">
    <property type="entry name" value="ABCEFAMILY"/>
</dbReference>
<dbReference type="SMART" id="SM00382">
    <property type="entry name" value="AAA"/>
    <property type="match status" value="2"/>
</dbReference>
<dbReference type="SUPFAM" id="SSF54862">
    <property type="entry name" value="4Fe-4S ferredoxins"/>
    <property type="match status" value="1"/>
</dbReference>
<dbReference type="SUPFAM" id="SSF52540">
    <property type="entry name" value="P-loop containing nucleoside triphosphate hydrolases"/>
    <property type="match status" value="2"/>
</dbReference>
<dbReference type="PROSITE" id="PS51379">
    <property type="entry name" value="4FE4S_FER_2"/>
    <property type="match status" value="2"/>
</dbReference>
<dbReference type="PROSITE" id="PS00211">
    <property type="entry name" value="ABC_TRANSPORTER_1"/>
    <property type="match status" value="1"/>
</dbReference>
<dbReference type="PROSITE" id="PS50893">
    <property type="entry name" value="ABC_TRANSPORTER_2"/>
    <property type="match status" value="2"/>
</dbReference>
<proteinExistence type="inferred from homology"/>